<dbReference type="EMBL" id="CP000614">
    <property type="protein sequence ID" value="ABO55592.1"/>
    <property type="molecule type" value="Genomic_DNA"/>
</dbReference>
<dbReference type="SMR" id="A4JH39"/>
<dbReference type="KEGG" id="bvi:Bcep1808_2597"/>
<dbReference type="eggNOG" id="COG2127">
    <property type="taxonomic scope" value="Bacteria"/>
</dbReference>
<dbReference type="HOGENOM" id="CLU_134358_0_0_4"/>
<dbReference type="Proteomes" id="UP000002287">
    <property type="component" value="Chromosome 1"/>
</dbReference>
<dbReference type="GO" id="GO:0030163">
    <property type="term" value="P:protein catabolic process"/>
    <property type="evidence" value="ECO:0007669"/>
    <property type="project" value="InterPro"/>
</dbReference>
<dbReference type="GO" id="GO:0006508">
    <property type="term" value="P:proteolysis"/>
    <property type="evidence" value="ECO:0007669"/>
    <property type="project" value="UniProtKB-UniRule"/>
</dbReference>
<dbReference type="FunFam" id="3.30.1390.10:FF:000002">
    <property type="entry name" value="ATP-dependent Clp protease adapter protein ClpS"/>
    <property type="match status" value="1"/>
</dbReference>
<dbReference type="Gene3D" id="3.30.1390.10">
    <property type="match status" value="1"/>
</dbReference>
<dbReference type="HAMAP" id="MF_00302">
    <property type="entry name" value="ClpS"/>
    <property type="match status" value="1"/>
</dbReference>
<dbReference type="InterPro" id="IPR022935">
    <property type="entry name" value="ClpS"/>
</dbReference>
<dbReference type="InterPro" id="IPR003769">
    <property type="entry name" value="ClpS_core"/>
</dbReference>
<dbReference type="InterPro" id="IPR014719">
    <property type="entry name" value="Ribosomal_bL12_C/ClpS-like"/>
</dbReference>
<dbReference type="NCBIfam" id="NF000672">
    <property type="entry name" value="PRK00033.1-5"/>
    <property type="match status" value="1"/>
</dbReference>
<dbReference type="PANTHER" id="PTHR33473:SF19">
    <property type="entry name" value="ATP-DEPENDENT CLP PROTEASE ADAPTER PROTEIN CLPS"/>
    <property type="match status" value="1"/>
</dbReference>
<dbReference type="PANTHER" id="PTHR33473">
    <property type="entry name" value="ATP-DEPENDENT CLP PROTEASE ADAPTER PROTEIN CLPS1, CHLOROPLASTIC"/>
    <property type="match status" value="1"/>
</dbReference>
<dbReference type="Pfam" id="PF02617">
    <property type="entry name" value="ClpS"/>
    <property type="match status" value="1"/>
</dbReference>
<dbReference type="SUPFAM" id="SSF54736">
    <property type="entry name" value="ClpS-like"/>
    <property type="match status" value="1"/>
</dbReference>
<evidence type="ECO:0000255" key="1">
    <source>
        <dbReference type="HAMAP-Rule" id="MF_00302"/>
    </source>
</evidence>
<gene>
    <name evidence="1" type="primary">clpS</name>
    <name type="ordered locus">Bcep1808_2597</name>
</gene>
<reference key="1">
    <citation type="submission" date="2007-03" db="EMBL/GenBank/DDBJ databases">
        <title>Complete sequence of chromosome 1 of Burkholderia vietnamiensis G4.</title>
        <authorList>
            <consortium name="US DOE Joint Genome Institute"/>
            <person name="Copeland A."/>
            <person name="Lucas S."/>
            <person name="Lapidus A."/>
            <person name="Barry K."/>
            <person name="Detter J.C."/>
            <person name="Glavina del Rio T."/>
            <person name="Hammon N."/>
            <person name="Israni S."/>
            <person name="Dalin E."/>
            <person name="Tice H."/>
            <person name="Pitluck S."/>
            <person name="Chain P."/>
            <person name="Malfatti S."/>
            <person name="Shin M."/>
            <person name="Vergez L."/>
            <person name="Schmutz J."/>
            <person name="Larimer F."/>
            <person name="Land M."/>
            <person name="Hauser L."/>
            <person name="Kyrpides N."/>
            <person name="Tiedje J."/>
            <person name="Richardson P."/>
        </authorList>
    </citation>
    <scope>NUCLEOTIDE SEQUENCE [LARGE SCALE GENOMIC DNA]</scope>
    <source>
        <strain>G4 / LMG 22486</strain>
    </source>
</reference>
<protein>
    <recommendedName>
        <fullName evidence="1">ATP-dependent Clp protease adapter protein ClpS</fullName>
    </recommendedName>
</protein>
<organism>
    <name type="scientific">Burkholderia vietnamiensis (strain G4 / LMG 22486)</name>
    <name type="common">Burkholderia cepacia (strain R1808)</name>
    <dbReference type="NCBI Taxonomy" id="269482"/>
    <lineage>
        <taxon>Bacteria</taxon>
        <taxon>Pseudomonadati</taxon>
        <taxon>Pseudomonadota</taxon>
        <taxon>Betaproteobacteria</taxon>
        <taxon>Burkholderiales</taxon>
        <taxon>Burkholderiaceae</taxon>
        <taxon>Burkholderia</taxon>
        <taxon>Burkholderia cepacia complex</taxon>
    </lineage>
</organism>
<accession>A4JH39</accession>
<comment type="function">
    <text evidence="1">Involved in the modulation of the specificity of the ClpAP-mediated ATP-dependent protein degradation.</text>
</comment>
<comment type="subunit">
    <text evidence="1">Binds to the N-terminal domain of the chaperone ClpA.</text>
</comment>
<comment type="similarity">
    <text evidence="1">Belongs to the ClpS family.</text>
</comment>
<proteinExistence type="inferred from homology"/>
<sequence>MAIIPDKQDSTVLERKQQKLKPPSMYKVVLLNDDFTPMEFVVMVVQEYFKKDRETATQIMLKVHREGRGVCGVYTRDIASTKVEQVVTHARQAGHPLQCVMEEA</sequence>
<name>CLPS_BURVG</name>
<feature type="chain" id="PRO_1000022601" description="ATP-dependent Clp protease adapter protein ClpS">
    <location>
        <begin position="1"/>
        <end position="104"/>
    </location>
</feature>